<evidence type="ECO:0000250" key="1">
    <source>
        <dbReference type="UniProtKB" id="O14508"/>
    </source>
</evidence>
<evidence type="ECO:0000250" key="2">
    <source>
        <dbReference type="UniProtKB" id="O35717"/>
    </source>
</evidence>
<evidence type="ECO:0000255" key="3">
    <source>
        <dbReference type="PROSITE-ProRule" id="PRU00191"/>
    </source>
</evidence>
<evidence type="ECO:0000255" key="4">
    <source>
        <dbReference type="PROSITE-ProRule" id="PRU00194"/>
    </source>
</evidence>
<evidence type="ECO:0000256" key="5">
    <source>
        <dbReference type="SAM" id="MobiDB-lite"/>
    </source>
</evidence>
<organism>
    <name type="scientific">Sus scrofa</name>
    <name type="common">Pig</name>
    <dbReference type="NCBI Taxonomy" id="9823"/>
    <lineage>
        <taxon>Eukaryota</taxon>
        <taxon>Metazoa</taxon>
        <taxon>Chordata</taxon>
        <taxon>Craniata</taxon>
        <taxon>Vertebrata</taxon>
        <taxon>Euteleostomi</taxon>
        <taxon>Mammalia</taxon>
        <taxon>Eutheria</taxon>
        <taxon>Laurasiatheria</taxon>
        <taxon>Artiodactyla</taxon>
        <taxon>Suina</taxon>
        <taxon>Suidae</taxon>
        <taxon>Sus</taxon>
    </lineage>
</organism>
<accession>Q7YRV6</accession>
<protein>
    <recommendedName>
        <fullName>Suppressor of cytokine signaling 2</fullName>
        <shortName>SOCS-2</shortName>
    </recommendedName>
</protein>
<gene>
    <name type="primary">SOCS2</name>
</gene>
<reference key="1">
    <citation type="submission" date="2003-06" db="EMBL/GenBank/DDBJ databases">
        <title>Cloning of the swine SOCS2 gene.</title>
        <authorList>
            <person name="Maccarone P."/>
            <person name="Drinkwater C.C."/>
            <person name="Nash A.D."/>
        </authorList>
    </citation>
    <scope>NUCLEOTIDE SEQUENCE [GENOMIC DNA]</scope>
</reference>
<reference key="2">
    <citation type="submission" date="2006-11" db="EMBL/GenBank/DDBJ databases">
        <title>Cloning of the pig SOCS2 gene.</title>
        <authorList>
            <person name="Chao S."/>
            <person name="Wen D.B."/>
            <person name="She Y.G."/>
        </authorList>
    </citation>
    <scope>NUCLEOTIDE SEQUENCE [MRNA]</scope>
    <source>
        <strain>Bamei</strain>
    </source>
</reference>
<proteinExistence type="evidence at transcript level"/>
<keyword id="KW-0963">Cytoplasm</keyword>
<keyword id="KW-0341">Growth regulation</keyword>
<keyword id="KW-1017">Isopeptide bond</keyword>
<keyword id="KW-0597">Phosphoprotein</keyword>
<keyword id="KW-1185">Reference proteome</keyword>
<keyword id="KW-0727">SH2 domain</keyword>
<keyword id="KW-0734">Signal transduction inhibitor</keyword>
<keyword id="KW-0832">Ubl conjugation</keyword>
<keyword id="KW-0833">Ubl conjugation pathway</keyword>
<name>SOCS2_PIG</name>
<feature type="chain" id="PRO_0000285848" description="Suppressor of cytokine signaling 2">
    <location>
        <begin position="1"/>
        <end position="198"/>
    </location>
</feature>
<feature type="domain" description="SH2" evidence="3">
    <location>
        <begin position="48"/>
        <end position="156"/>
    </location>
</feature>
<feature type="domain" description="SOCS box" evidence="4">
    <location>
        <begin position="151"/>
        <end position="197"/>
    </location>
</feature>
<feature type="region of interest" description="Interaction with AREL1" evidence="1">
    <location>
        <begin position="1"/>
        <end position="75"/>
    </location>
</feature>
<feature type="region of interest" description="Disordered" evidence="5">
    <location>
        <begin position="1"/>
        <end position="31"/>
    </location>
</feature>
<feature type="compositionally biased region" description="Polar residues" evidence="5">
    <location>
        <begin position="14"/>
        <end position="25"/>
    </location>
</feature>
<feature type="modified residue" description="Phosphoserine" evidence="1">
    <location>
        <position position="30"/>
    </location>
</feature>
<feature type="modified residue" description="Phosphoserine" evidence="1">
    <location>
        <position position="52"/>
    </location>
</feature>
<feature type="cross-link" description="Glycyl lysine isopeptide (Lys-Gly) (interchain with G-Cter in ubiquitin)" evidence="1">
    <location>
        <position position="173"/>
    </location>
</feature>
<dbReference type="EMBL" id="AY312266">
    <property type="protein sequence ID" value="AAP78900.1"/>
    <property type="molecule type" value="Genomic_DNA"/>
</dbReference>
<dbReference type="EMBL" id="EF121242">
    <property type="protein sequence ID" value="ABL61533.1"/>
    <property type="molecule type" value="mRNA"/>
</dbReference>
<dbReference type="RefSeq" id="NP_001090930.1">
    <property type="nucleotide sequence ID" value="NM_001097461.1"/>
</dbReference>
<dbReference type="RefSeq" id="XP_005664315.1">
    <property type="nucleotide sequence ID" value="XM_005664258.3"/>
</dbReference>
<dbReference type="RefSeq" id="XP_005664316.1">
    <property type="nucleotide sequence ID" value="XM_005664259.3"/>
</dbReference>
<dbReference type="RefSeq" id="XP_005664317.1">
    <property type="nucleotide sequence ID" value="XM_005664260.3"/>
</dbReference>
<dbReference type="RefSeq" id="XP_013853534.1">
    <property type="nucleotide sequence ID" value="XM_013998080.2"/>
</dbReference>
<dbReference type="RefSeq" id="XP_013853535.1">
    <property type="nucleotide sequence ID" value="XM_013998081.2"/>
</dbReference>
<dbReference type="RefSeq" id="XP_013853537.1">
    <property type="nucleotide sequence ID" value="XM_013998083.2"/>
</dbReference>
<dbReference type="RefSeq" id="XP_013853538.1">
    <property type="nucleotide sequence ID" value="XM_013998084.2"/>
</dbReference>
<dbReference type="SMR" id="Q7YRV6"/>
<dbReference type="FunCoup" id="Q7YRV6">
    <property type="interactions" value="80"/>
</dbReference>
<dbReference type="PaxDb" id="9823-ENSSSCP00000000973"/>
<dbReference type="Ensembl" id="ENSSSCT00000000994.5">
    <property type="protein sequence ID" value="ENSSSCP00000000973.2"/>
    <property type="gene ID" value="ENSSSCG00000053891.1"/>
</dbReference>
<dbReference type="Ensembl" id="ENSSSCT00015098158.1">
    <property type="protein sequence ID" value="ENSSSCP00015040371.1"/>
    <property type="gene ID" value="ENSSSCG00015073100.1"/>
</dbReference>
<dbReference type="Ensembl" id="ENSSSCT00025089274.1">
    <property type="protein sequence ID" value="ENSSSCP00025039051.1"/>
    <property type="gene ID" value="ENSSSCG00025064893.1"/>
</dbReference>
<dbReference type="Ensembl" id="ENSSSCT00030075755.1">
    <property type="protein sequence ID" value="ENSSSCP00030034615.1"/>
    <property type="gene ID" value="ENSSSCG00030054341.1"/>
</dbReference>
<dbReference type="Ensembl" id="ENSSSCT00035013131.1">
    <property type="protein sequence ID" value="ENSSSCP00035004443.1"/>
    <property type="gene ID" value="ENSSSCG00035010477.1"/>
</dbReference>
<dbReference type="Ensembl" id="ENSSSCT00040026188.1">
    <property type="protein sequence ID" value="ENSSSCP00040011070.1"/>
    <property type="gene ID" value="ENSSSCG00040019366.1"/>
</dbReference>
<dbReference type="Ensembl" id="ENSSSCT00045011279.1">
    <property type="protein sequence ID" value="ENSSSCP00045007673.1"/>
    <property type="gene ID" value="ENSSSCG00045006762.1"/>
</dbReference>
<dbReference type="Ensembl" id="ENSSSCT00050070176.1">
    <property type="protein sequence ID" value="ENSSSCP00050030148.1"/>
    <property type="gene ID" value="ENSSSCG00050051537.1"/>
</dbReference>
<dbReference type="Ensembl" id="ENSSSCT00055045197.1">
    <property type="protein sequence ID" value="ENSSSCP00055036013.1"/>
    <property type="gene ID" value="ENSSSCG00055022901.1"/>
</dbReference>
<dbReference type="Ensembl" id="ENSSSCT00060106130.1">
    <property type="protein sequence ID" value="ENSSSCP00060046815.1"/>
    <property type="gene ID" value="ENSSSCG00060077101.1"/>
</dbReference>
<dbReference type="Ensembl" id="ENSSSCT00065037276.1">
    <property type="protein sequence ID" value="ENSSSCP00065015675.1"/>
    <property type="gene ID" value="ENSSSCG00065027674.1"/>
</dbReference>
<dbReference type="Ensembl" id="ENSSSCT00065037279.1">
    <property type="protein sequence ID" value="ENSSSCP00065015677.1"/>
    <property type="gene ID" value="ENSSSCG00065027674.1"/>
</dbReference>
<dbReference type="Ensembl" id="ENSSSCT00065037285.1">
    <property type="protein sequence ID" value="ENSSSCP00065015680.1"/>
    <property type="gene ID" value="ENSSSCG00065027674.1"/>
</dbReference>
<dbReference type="Ensembl" id="ENSSSCT00065037287.1">
    <property type="protein sequence ID" value="ENSSSCP00065015681.1"/>
    <property type="gene ID" value="ENSSSCG00065027674.1"/>
</dbReference>
<dbReference type="Ensembl" id="ENSSSCT00070001875.1">
    <property type="protein sequence ID" value="ENSSSCP00070001563.1"/>
    <property type="gene ID" value="ENSSSCG00070000975.1"/>
</dbReference>
<dbReference type="Ensembl" id="ENSSSCT00070001883.1">
    <property type="protein sequence ID" value="ENSSSCP00070001569.1"/>
    <property type="gene ID" value="ENSSSCG00070000975.1"/>
</dbReference>
<dbReference type="Ensembl" id="ENSSSCT00070001887.1">
    <property type="protein sequence ID" value="ENSSSCP00070001573.1"/>
    <property type="gene ID" value="ENSSSCG00070000975.1"/>
</dbReference>
<dbReference type="Ensembl" id="ENSSSCT00085011119">
    <property type="protein sequence ID" value="ENSSSCP00085007903"/>
    <property type="gene ID" value="ENSSSCG00085006009"/>
</dbReference>
<dbReference type="Ensembl" id="ENSSSCT00090030316">
    <property type="protein sequence ID" value="ENSSSCP00090018882"/>
    <property type="gene ID" value="ENSSSCG00090017148"/>
</dbReference>
<dbReference type="Ensembl" id="ENSSSCT00105023198">
    <property type="protein sequence ID" value="ENSSSCP00105016674"/>
    <property type="gene ID" value="ENSSSCG00105011727"/>
</dbReference>
<dbReference type="Ensembl" id="ENSSSCT00110047078">
    <property type="protein sequence ID" value="ENSSSCP00110033106"/>
    <property type="gene ID" value="ENSSSCG00110024376"/>
</dbReference>
<dbReference type="Ensembl" id="ENSSSCT00115010395">
    <property type="protein sequence ID" value="ENSSSCP00115009789"/>
    <property type="gene ID" value="ENSSSCG00115006005"/>
</dbReference>
<dbReference type="Ensembl" id="ENSSSCT00130021061">
    <property type="protein sequence ID" value="ENSSSCP00130014458"/>
    <property type="gene ID" value="ENSSSCG00130011037"/>
</dbReference>
<dbReference type="GeneID" id="100037966"/>
<dbReference type="KEGG" id="ssc:100037966"/>
<dbReference type="CTD" id="8835"/>
<dbReference type="eggNOG" id="KOG4566">
    <property type="taxonomic scope" value="Eukaryota"/>
</dbReference>
<dbReference type="GeneTree" id="ENSGT00940000157983"/>
<dbReference type="HOGENOM" id="CLU_079452_4_0_1"/>
<dbReference type="InParanoid" id="Q7YRV6"/>
<dbReference type="OMA" id="LRKTGWY"/>
<dbReference type="OrthoDB" id="10063348at2759"/>
<dbReference type="TreeFam" id="TF321368"/>
<dbReference type="Reactome" id="R-SSC-8951664">
    <property type="pathway name" value="Neddylation"/>
</dbReference>
<dbReference type="Reactome" id="R-SSC-9706369">
    <property type="pathway name" value="Negative regulation of FLT3"/>
</dbReference>
<dbReference type="UniPathway" id="UPA00143"/>
<dbReference type="Proteomes" id="UP000008227">
    <property type="component" value="Chromosome 5"/>
</dbReference>
<dbReference type="Proteomes" id="UP000314985">
    <property type="component" value="Unassembled WGS sequence"/>
</dbReference>
<dbReference type="Proteomes" id="UP000694570">
    <property type="component" value="Unplaced"/>
</dbReference>
<dbReference type="Proteomes" id="UP000694571">
    <property type="component" value="Unplaced"/>
</dbReference>
<dbReference type="Proteomes" id="UP000694720">
    <property type="component" value="Unplaced"/>
</dbReference>
<dbReference type="Proteomes" id="UP000694722">
    <property type="component" value="Unplaced"/>
</dbReference>
<dbReference type="Proteomes" id="UP000694723">
    <property type="component" value="Unplaced"/>
</dbReference>
<dbReference type="Proteomes" id="UP000694724">
    <property type="component" value="Unplaced"/>
</dbReference>
<dbReference type="Proteomes" id="UP000694725">
    <property type="component" value="Unplaced"/>
</dbReference>
<dbReference type="Proteomes" id="UP000694726">
    <property type="component" value="Unplaced"/>
</dbReference>
<dbReference type="Proteomes" id="UP000694727">
    <property type="component" value="Unplaced"/>
</dbReference>
<dbReference type="Proteomes" id="UP000694728">
    <property type="component" value="Unplaced"/>
</dbReference>
<dbReference type="Bgee" id="ENSSSCG00000000910">
    <property type="expression patterns" value="Expressed in pituitary gland and 43 other cell types or tissues"/>
</dbReference>
<dbReference type="ExpressionAtlas" id="Q7YRV6">
    <property type="expression patterns" value="baseline"/>
</dbReference>
<dbReference type="GO" id="GO:0031466">
    <property type="term" value="C:Cul5-RING ubiquitin ligase complex"/>
    <property type="evidence" value="ECO:0000250"/>
    <property type="project" value="UniProtKB"/>
</dbReference>
<dbReference type="GO" id="GO:0005737">
    <property type="term" value="C:cytoplasm"/>
    <property type="evidence" value="ECO:0007669"/>
    <property type="project" value="UniProtKB-SubCell"/>
</dbReference>
<dbReference type="GO" id="GO:0005126">
    <property type="term" value="F:cytokine receptor binding"/>
    <property type="evidence" value="ECO:0000318"/>
    <property type="project" value="GO_Central"/>
</dbReference>
<dbReference type="GO" id="GO:0005131">
    <property type="term" value="F:growth hormone receptor binding"/>
    <property type="evidence" value="ECO:0007669"/>
    <property type="project" value="Ensembl"/>
</dbReference>
<dbReference type="GO" id="GO:0005159">
    <property type="term" value="F:insulin-like growth factor receptor binding"/>
    <property type="evidence" value="ECO:0007669"/>
    <property type="project" value="Ensembl"/>
</dbReference>
<dbReference type="GO" id="GO:0140031">
    <property type="term" value="F:phosphorylation-dependent protein binding"/>
    <property type="evidence" value="ECO:0000250"/>
    <property type="project" value="UniProtKB"/>
</dbReference>
<dbReference type="GO" id="GO:1990756">
    <property type="term" value="F:ubiquitin-like ligase-substrate adaptor activity"/>
    <property type="evidence" value="ECO:0000250"/>
    <property type="project" value="UniProtKB"/>
</dbReference>
<dbReference type="GO" id="GO:0007259">
    <property type="term" value="P:cell surface receptor signaling pathway via JAK-STAT"/>
    <property type="evidence" value="ECO:0007669"/>
    <property type="project" value="Ensembl"/>
</dbReference>
<dbReference type="GO" id="GO:0019221">
    <property type="term" value="P:cytokine-mediated signaling pathway"/>
    <property type="evidence" value="ECO:0000318"/>
    <property type="project" value="GO_Central"/>
</dbReference>
<dbReference type="GO" id="GO:0060396">
    <property type="term" value="P:growth hormone receptor signaling pathway"/>
    <property type="evidence" value="ECO:0007669"/>
    <property type="project" value="Ensembl"/>
</dbReference>
<dbReference type="GO" id="GO:0035556">
    <property type="term" value="P:intracellular signal transduction"/>
    <property type="evidence" value="ECO:0007669"/>
    <property type="project" value="Ensembl"/>
</dbReference>
<dbReference type="GO" id="GO:0007595">
    <property type="term" value="P:lactation"/>
    <property type="evidence" value="ECO:0007669"/>
    <property type="project" value="Ensembl"/>
</dbReference>
<dbReference type="GO" id="GO:0060749">
    <property type="term" value="P:mammary gland alveolus development"/>
    <property type="evidence" value="ECO:0007669"/>
    <property type="project" value="Ensembl"/>
</dbReference>
<dbReference type="GO" id="GO:0060400">
    <property type="term" value="P:negative regulation of growth hormone receptor signaling pathway"/>
    <property type="evidence" value="ECO:0000250"/>
    <property type="project" value="UniProtKB"/>
</dbReference>
<dbReference type="GO" id="GO:0040015">
    <property type="term" value="P:negative regulation of multicellular organism growth"/>
    <property type="evidence" value="ECO:0007669"/>
    <property type="project" value="Ensembl"/>
</dbReference>
<dbReference type="GO" id="GO:0046426">
    <property type="term" value="P:negative regulation of receptor signaling pathway via JAK-STAT"/>
    <property type="evidence" value="ECO:0000318"/>
    <property type="project" value="GO_Central"/>
</dbReference>
<dbReference type="GO" id="GO:0045666">
    <property type="term" value="P:positive regulation of neuron differentiation"/>
    <property type="evidence" value="ECO:0007669"/>
    <property type="project" value="Ensembl"/>
</dbReference>
<dbReference type="GO" id="GO:0043161">
    <property type="term" value="P:proteasome-mediated ubiquitin-dependent protein catabolic process"/>
    <property type="evidence" value="ECO:0000250"/>
    <property type="project" value="UniProtKB"/>
</dbReference>
<dbReference type="GO" id="GO:0016567">
    <property type="term" value="P:protein ubiquitination"/>
    <property type="evidence" value="ECO:0007669"/>
    <property type="project" value="UniProtKB-UniPathway"/>
</dbReference>
<dbReference type="GO" id="GO:0032355">
    <property type="term" value="P:response to estradiol"/>
    <property type="evidence" value="ECO:0007669"/>
    <property type="project" value="Ensembl"/>
</dbReference>
<dbReference type="CDD" id="cd10383">
    <property type="entry name" value="SH2_SOCS2"/>
    <property type="match status" value="1"/>
</dbReference>
<dbReference type="CDD" id="cd03736">
    <property type="entry name" value="SOCS_SOCS2"/>
    <property type="match status" value="1"/>
</dbReference>
<dbReference type="FunFam" id="1.10.750.20:FF:000002">
    <property type="entry name" value="Suppressor of cytokine signaling 2"/>
    <property type="match status" value="1"/>
</dbReference>
<dbReference type="FunFam" id="3.30.505.10:FF:000049">
    <property type="entry name" value="Suppressor of cytokine signaling 2"/>
    <property type="match status" value="1"/>
</dbReference>
<dbReference type="Gene3D" id="3.30.505.10">
    <property type="entry name" value="SH2 domain"/>
    <property type="match status" value="1"/>
</dbReference>
<dbReference type="Gene3D" id="1.10.750.20">
    <property type="entry name" value="SOCS box"/>
    <property type="match status" value="1"/>
</dbReference>
<dbReference type="InterPro" id="IPR000980">
    <property type="entry name" value="SH2"/>
</dbReference>
<dbReference type="InterPro" id="IPR036860">
    <property type="entry name" value="SH2_dom_sf"/>
</dbReference>
<dbReference type="InterPro" id="IPR035862">
    <property type="entry name" value="SOCS2_SH2"/>
</dbReference>
<dbReference type="InterPro" id="IPR028410">
    <property type="entry name" value="SOCS2_SOCS_box"/>
</dbReference>
<dbReference type="InterPro" id="IPR001496">
    <property type="entry name" value="SOCS_box"/>
</dbReference>
<dbReference type="InterPro" id="IPR036036">
    <property type="entry name" value="SOCS_box-like_dom_sf"/>
</dbReference>
<dbReference type="PANTHER" id="PTHR10155">
    <property type="entry name" value="PHOSPHATIDYLINOSITOL 3-KINASE REGULATORY SUBUNIT"/>
    <property type="match status" value="1"/>
</dbReference>
<dbReference type="PANTHER" id="PTHR10155:SF7">
    <property type="entry name" value="SUPPRESSOR OF CYTOKINE SIGNALING 2"/>
    <property type="match status" value="1"/>
</dbReference>
<dbReference type="Pfam" id="PF00017">
    <property type="entry name" value="SH2"/>
    <property type="match status" value="1"/>
</dbReference>
<dbReference type="Pfam" id="PF07525">
    <property type="entry name" value="SOCS_box"/>
    <property type="match status" value="1"/>
</dbReference>
<dbReference type="PRINTS" id="PR00401">
    <property type="entry name" value="SH2DOMAIN"/>
</dbReference>
<dbReference type="SMART" id="SM00252">
    <property type="entry name" value="SH2"/>
    <property type="match status" value="1"/>
</dbReference>
<dbReference type="SMART" id="SM00253">
    <property type="entry name" value="SOCS"/>
    <property type="match status" value="1"/>
</dbReference>
<dbReference type="SMART" id="SM00969">
    <property type="entry name" value="SOCS_box"/>
    <property type="match status" value="1"/>
</dbReference>
<dbReference type="SUPFAM" id="SSF55550">
    <property type="entry name" value="SH2 domain"/>
    <property type="match status" value="1"/>
</dbReference>
<dbReference type="SUPFAM" id="SSF158235">
    <property type="entry name" value="SOCS box-like"/>
    <property type="match status" value="1"/>
</dbReference>
<dbReference type="PROSITE" id="PS50001">
    <property type="entry name" value="SH2"/>
    <property type="match status" value="1"/>
</dbReference>
<dbReference type="PROSITE" id="PS50225">
    <property type="entry name" value="SOCS"/>
    <property type="match status" value="1"/>
</dbReference>
<comment type="function">
    <text evidence="1">Substrate-recognition component of a cullin-5-RING E3 ubiquitin-protein ligase complex (ECS complex, also named CRL5 complex), which mediates the ubiquitination and subsequent proteasomal degradation of target proteins, such as EPOR and GHR. Specifically recognizes and binds phosphorylated proteins via its SH2 domain, promoting their ubiquitination. The ECS(SOCS2) complex acts as a key regulator of growth hormone receptor (GHR) levels by mediating ubiquitination and degradation of GHR, following GHR phosphorylation by JAK2. The ECS(SOCS2) also catalyzes ubiquitination and degradation of JAK2-phosphorylated EPOR.</text>
</comment>
<comment type="pathway">
    <text evidence="1">Protein modification; protein ubiquitination.</text>
</comment>
<comment type="subunit">
    <text evidence="1">Substrate-recognition component of the ECS(SOCS2) complex, composed of SOCS2, CUL5, ELOB, ELOC and RNF7/RBX2. Interacts with IGF1R. Interacts with DCUN1D1.</text>
</comment>
<comment type="subcellular location">
    <subcellularLocation>
        <location evidence="1">Cytoplasm</location>
    </subcellularLocation>
</comment>
<comment type="domain">
    <text evidence="1">The SOCS box domain mediates the interaction with the Elongin BC complex, an adapter module in different E3 ubiquitin ligase complexes.</text>
</comment>
<comment type="PTM">
    <text evidence="1 2">Ubiquitinated; mediated by AREL1 and leading to its subsequent proteasomal degradation. Ubiquitination is dependent on its phosphorylation at Ser-52, by PKC (By similarity). Ubiquitination is stimulated by LPS (By similarity).</text>
</comment>
<comment type="PTM">
    <text evidence="1">Phosphorylation at Ser-52 by PKC facilitates its ubiquitination and proteasomal degradation.</text>
</comment>
<sequence length="198" mass="22254">MTLRCLEPSGNGAEGTQSQWGTSGSAEEPSPEAARLAKALRELSHTGWYWGSMTVNEAKEKLKEAPEGTFLIRDSSHSDYLLTISVKTSAGPTNLRIEYQDGKFRLDSIICVKSKLKQFDSVVHLIDYYVQMCKDKRTGPEAPRNGTVHLYLTKPLYTSAPPLQHLCRLTINKCTGTIWGLPLPTRLKDYLEEYKFQV</sequence>